<organism>
    <name type="scientific">Candida glabrata (strain ATCC 2001 / BCRC 20586 / JCM 3761 / NBRC 0622 / NRRL Y-65 / CBS 138)</name>
    <name type="common">Yeast</name>
    <name type="synonym">Nakaseomyces glabratus</name>
    <dbReference type="NCBI Taxonomy" id="284593"/>
    <lineage>
        <taxon>Eukaryota</taxon>
        <taxon>Fungi</taxon>
        <taxon>Dikarya</taxon>
        <taxon>Ascomycota</taxon>
        <taxon>Saccharomycotina</taxon>
        <taxon>Saccharomycetes</taxon>
        <taxon>Saccharomycetales</taxon>
        <taxon>Saccharomycetaceae</taxon>
        <taxon>Nakaseomyces</taxon>
    </lineage>
</organism>
<reference key="1">
    <citation type="journal article" date="2004" name="Nature">
        <title>Genome evolution in yeasts.</title>
        <authorList>
            <person name="Dujon B."/>
            <person name="Sherman D."/>
            <person name="Fischer G."/>
            <person name="Durrens P."/>
            <person name="Casaregola S."/>
            <person name="Lafontaine I."/>
            <person name="de Montigny J."/>
            <person name="Marck C."/>
            <person name="Neuveglise C."/>
            <person name="Talla E."/>
            <person name="Goffard N."/>
            <person name="Frangeul L."/>
            <person name="Aigle M."/>
            <person name="Anthouard V."/>
            <person name="Babour A."/>
            <person name="Barbe V."/>
            <person name="Barnay S."/>
            <person name="Blanchin S."/>
            <person name="Beckerich J.-M."/>
            <person name="Beyne E."/>
            <person name="Bleykasten C."/>
            <person name="Boisrame A."/>
            <person name="Boyer J."/>
            <person name="Cattolico L."/>
            <person name="Confanioleri F."/>
            <person name="de Daruvar A."/>
            <person name="Despons L."/>
            <person name="Fabre E."/>
            <person name="Fairhead C."/>
            <person name="Ferry-Dumazet H."/>
            <person name="Groppi A."/>
            <person name="Hantraye F."/>
            <person name="Hennequin C."/>
            <person name="Jauniaux N."/>
            <person name="Joyet P."/>
            <person name="Kachouri R."/>
            <person name="Kerrest A."/>
            <person name="Koszul R."/>
            <person name="Lemaire M."/>
            <person name="Lesur I."/>
            <person name="Ma L."/>
            <person name="Muller H."/>
            <person name="Nicaud J.-M."/>
            <person name="Nikolski M."/>
            <person name="Oztas S."/>
            <person name="Ozier-Kalogeropoulos O."/>
            <person name="Pellenz S."/>
            <person name="Potier S."/>
            <person name="Richard G.-F."/>
            <person name="Straub M.-L."/>
            <person name="Suleau A."/>
            <person name="Swennen D."/>
            <person name="Tekaia F."/>
            <person name="Wesolowski-Louvel M."/>
            <person name="Westhof E."/>
            <person name="Wirth B."/>
            <person name="Zeniou-Meyer M."/>
            <person name="Zivanovic Y."/>
            <person name="Bolotin-Fukuhara M."/>
            <person name="Thierry A."/>
            <person name="Bouchier C."/>
            <person name="Caudron B."/>
            <person name="Scarpelli C."/>
            <person name="Gaillardin C."/>
            <person name="Weissenbach J."/>
            <person name="Wincker P."/>
            <person name="Souciet J.-L."/>
        </authorList>
    </citation>
    <scope>NUCLEOTIDE SEQUENCE [LARGE SCALE GENOMIC DNA]</scope>
    <source>
        <strain>ATCC 2001 / BCRC 20586 / JCM 3761 / NBRC 0622 / NRRL Y-65 / CBS 138</strain>
    </source>
</reference>
<protein>
    <recommendedName>
        <fullName>Required for respiratory growth protein 9, mitochondrial</fullName>
    </recommendedName>
</protein>
<evidence type="ECO:0000250" key="1"/>
<evidence type="ECO:0000255" key="2"/>
<evidence type="ECO:0000305" key="3"/>
<comment type="function">
    <text evidence="1">Required for respiratory activity and maintenance and expression of the mitochondrial genome.</text>
</comment>
<comment type="subcellular location">
    <subcellularLocation>
        <location evidence="1">Mitochondrion</location>
    </subcellularLocation>
</comment>
<comment type="similarity">
    <text evidence="3">Belongs to the RRG9 family.</text>
</comment>
<keyword id="KW-0496">Mitochondrion</keyword>
<keyword id="KW-1185">Reference proteome</keyword>
<keyword id="KW-0809">Transit peptide</keyword>
<sequence length="207" mass="24301">MLIKVPTAVRLYSVKRTPIKPFKEVLKRIQPSNTELSEKSKKNNIPEWKKQIISVKKKIGNERWSPSKRLSREEIESVRLLKRSFANITNTELSERFKVSPEAIRRILKSNWEPNDEEWEKVQKRWQRRGERIKELYANGGNISSNGHQVVENLVPHKKVIISSGRHMNTFDVIEKKVRSTKPTISIKDQKLKDKKLKLLEISATKR</sequence>
<gene>
    <name type="primary">RRG9</name>
    <name type="ordered locus">CAGL0K04829g</name>
</gene>
<name>RRG9_CANGA</name>
<dbReference type="EMBL" id="CR380957">
    <property type="protein sequence ID" value="CAG61397.1"/>
    <property type="molecule type" value="Genomic_DNA"/>
</dbReference>
<dbReference type="RefSeq" id="XP_448436.1">
    <property type="nucleotide sequence ID" value="XM_448436.1"/>
</dbReference>
<dbReference type="SMR" id="Q6FMV8"/>
<dbReference type="FunCoup" id="Q6FMV8">
    <property type="interactions" value="42"/>
</dbReference>
<dbReference type="STRING" id="284593.Q6FMV8"/>
<dbReference type="EnsemblFungi" id="CAGL0K04829g-T">
    <property type="protein sequence ID" value="CAGL0K04829g-T-p1"/>
    <property type="gene ID" value="CAGL0K04829g"/>
</dbReference>
<dbReference type="KEGG" id="cgr:2890015"/>
<dbReference type="CGD" id="CAL0133849">
    <property type="gene designation" value="CAGL0K04829g"/>
</dbReference>
<dbReference type="VEuPathDB" id="FungiDB:CAGL0K04829g"/>
<dbReference type="eggNOG" id="ENOG502S7IA">
    <property type="taxonomic scope" value="Eukaryota"/>
</dbReference>
<dbReference type="HOGENOM" id="CLU_100293_0_0_1"/>
<dbReference type="InParanoid" id="Q6FMV8"/>
<dbReference type="OMA" id="WREDTKI"/>
<dbReference type="Proteomes" id="UP000002428">
    <property type="component" value="Chromosome K"/>
</dbReference>
<dbReference type="GO" id="GO:0005739">
    <property type="term" value="C:mitochondrion"/>
    <property type="evidence" value="ECO:0007669"/>
    <property type="project" value="UniProtKB-SubCell"/>
</dbReference>
<dbReference type="GO" id="GO:0005634">
    <property type="term" value="C:nucleus"/>
    <property type="evidence" value="ECO:0007669"/>
    <property type="project" value="TreeGrafter"/>
</dbReference>
<dbReference type="GO" id="GO:0000002">
    <property type="term" value="P:mitochondrial genome maintenance"/>
    <property type="evidence" value="ECO:0007669"/>
    <property type="project" value="EnsemblFungi"/>
</dbReference>
<dbReference type="InterPro" id="IPR010487">
    <property type="entry name" value="NGRN/Rrg9"/>
</dbReference>
<dbReference type="PANTHER" id="PTHR13475">
    <property type="entry name" value="NEUGRIN"/>
    <property type="match status" value="1"/>
</dbReference>
<dbReference type="PANTHER" id="PTHR13475:SF3">
    <property type="entry name" value="NEUGRIN"/>
    <property type="match status" value="1"/>
</dbReference>
<dbReference type="Pfam" id="PF06413">
    <property type="entry name" value="Neugrin"/>
    <property type="match status" value="1"/>
</dbReference>
<accession>Q6FMV8</accession>
<feature type="transit peptide" description="Mitochondrion" evidence="2">
    <location>
        <begin position="1"/>
        <end position="12"/>
    </location>
</feature>
<feature type="chain" id="PRO_0000407943" description="Required for respiratory growth protein 9, mitochondrial">
    <location>
        <begin position="13"/>
        <end position="207"/>
    </location>
</feature>
<proteinExistence type="inferred from homology"/>